<comment type="function">
    <text evidence="1">Specifically methylates position 2 of adenine 2503 in 23S rRNA and position 2 of adenine 37 in tRNAs. m2A2503 modification seems to play a crucial role in the proofreading step occurring at the peptidyl transferase center and thus would serve to optimize ribosomal fidelity.</text>
</comment>
<comment type="catalytic activity">
    <reaction evidence="1">
        <text>adenosine(2503) in 23S rRNA + 2 reduced [2Fe-2S]-[ferredoxin] + 2 S-adenosyl-L-methionine = 2-methyladenosine(2503) in 23S rRNA + 5'-deoxyadenosine + L-methionine + 2 oxidized [2Fe-2S]-[ferredoxin] + S-adenosyl-L-homocysteine</text>
        <dbReference type="Rhea" id="RHEA:42916"/>
        <dbReference type="Rhea" id="RHEA-COMP:10000"/>
        <dbReference type="Rhea" id="RHEA-COMP:10001"/>
        <dbReference type="Rhea" id="RHEA-COMP:10152"/>
        <dbReference type="Rhea" id="RHEA-COMP:10282"/>
        <dbReference type="ChEBI" id="CHEBI:17319"/>
        <dbReference type="ChEBI" id="CHEBI:33737"/>
        <dbReference type="ChEBI" id="CHEBI:33738"/>
        <dbReference type="ChEBI" id="CHEBI:57844"/>
        <dbReference type="ChEBI" id="CHEBI:57856"/>
        <dbReference type="ChEBI" id="CHEBI:59789"/>
        <dbReference type="ChEBI" id="CHEBI:74411"/>
        <dbReference type="ChEBI" id="CHEBI:74497"/>
        <dbReference type="EC" id="2.1.1.192"/>
    </reaction>
</comment>
<comment type="catalytic activity">
    <reaction evidence="1">
        <text>adenosine(37) in tRNA + 2 reduced [2Fe-2S]-[ferredoxin] + 2 S-adenosyl-L-methionine = 2-methyladenosine(37) in tRNA + 5'-deoxyadenosine + L-methionine + 2 oxidized [2Fe-2S]-[ferredoxin] + S-adenosyl-L-homocysteine</text>
        <dbReference type="Rhea" id="RHEA:43332"/>
        <dbReference type="Rhea" id="RHEA-COMP:10000"/>
        <dbReference type="Rhea" id="RHEA-COMP:10001"/>
        <dbReference type="Rhea" id="RHEA-COMP:10162"/>
        <dbReference type="Rhea" id="RHEA-COMP:10485"/>
        <dbReference type="ChEBI" id="CHEBI:17319"/>
        <dbReference type="ChEBI" id="CHEBI:33737"/>
        <dbReference type="ChEBI" id="CHEBI:33738"/>
        <dbReference type="ChEBI" id="CHEBI:57844"/>
        <dbReference type="ChEBI" id="CHEBI:57856"/>
        <dbReference type="ChEBI" id="CHEBI:59789"/>
        <dbReference type="ChEBI" id="CHEBI:74411"/>
        <dbReference type="ChEBI" id="CHEBI:74497"/>
        <dbReference type="EC" id="2.1.1.192"/>
    </reaction>
</comment>
<comment type="cofactor">
    <cofactor evidence="1">
        <name>[4Fe-4S] cluster</name>
        <dbReference type="ChEBI" id="CHEBI:49883"/>
    </cofactor>
    <text evidence="1">Binds 1 [4Fe-4S] cluster. The cluster is coordinated with 3 cysteines and an exchangeable S-adenosyl-L-methionine.</text>
</comment>
<comment type="subcellular location">
    <subcellularLocation>
        <location evidence="1">Cytoplasm</location>
    </subcellularLocation>
</comment>
<comment type="miscellaneous">
    <text evidence="1">Reaction proceeds by a ping-pong mechanism involving intermediate methylation of a conserved cysteine residue.</text>
</comment>
<comment type="similarity">
    <text evidence="1">Belongs to the radical SAM superfamily. RlmN family.</text>
</comment>
<accession>B1JDQ5</accession>
<keyword id="KW-0004">4Fe-4S</keyword>
<keyword id="KW-0963">Cytoplasm</keyword>
<keyword id="KW-1015">Disulfide bond</keyword>
<keyword id="KW-0408">Iron</keyword>
<keyword id="KW-0411">Iron-sulfur</keyword>
<keyword id="KW-0479">Metal-binding</keyword>
<keyword id="KW-0489">Methyltransferase</keyword>
<keyword id="KW-0698">rRNA processing</keyword>
<keyword id="KW-0949">S-adenosyl-L-methionine</keyword>
<keyword id="KW-0808">Transferase</keyword>
<keyword id="KW-0819">tRNA processing</keyword>
<dbReference type="EC" id="2.1.1.192" evidence="1"/>
<dbReference type="EMBL" id="CP000949">
    <property type="protein sequence ID" value="ACA74808.1"/>
    <property type="molecule type" value="Genomic_DNA"/>
</dbReference>
<dbReference type="SMR" id="B1JDQ5"/>
<dbReference type="STRING" id="390235.PputW619_4328"/>
<dbReference type="KEGG" id="ppw:PputW619_4328"/>
<dbReference type="eggNOG" id="COG0820">
    <property type="taxonomic scope" value="Bacteria"/>
</dbReference>
<dbReference type="HOGENOM" id="CLU_029101_0_0_6"/>
<dbReference type="OrthoDB" id="9793973at2"/>
<dbReference type="GO" id="GO:0005737">
    <property type="term" value="C:cytoplasm"/>
    <property type="evidence" value="ECO:0007669"/>
    <property type="project" value="UniProtKB-SubCell"/>
</dbReference>
<dbReference type="GO" id="GO:0051539">
    <property type="term" value="F:4 iron, 4 sulfur cluster binding"/>
    <property type="evidence" value="ECO:0007669"/>
    <property type="project" value="UniProtKB-UniRule"/>
</dbReference>
<dbReference type="GO" id="GO:0046872">
    <property type="term" value="F:metal ion binding"/>
    <property type="evidence" value="ECO:0007669"/>
    <property type="project" value="UniProtKB-KW"/>
</dbReference>
<dbReference type="GO" id="GO:0070040">
    <property type="term" value="F:rRNA (adenine(2503)-C2-)-methyltransferase activity"/>
    <property type="evidence" value="ECO:0007669"/>
    <property type="project" value="UniProtKB-UniRule"/>
</dbReference>
<dbReference type="GO" id="GO:0019843">
    <property type="term" value="F:rRNA binding"/>
    <property type="evidence" value="ECO:0007669"/>
    <property type="project" value="UniProtKB-UniRule"/>
</dbReference>
<dbReference type="GO" id="GO:0002935">
    <property type="term" value="F:tRNA (adenine(37)-C2)-methyltransferase activity"/>
    <property type="evidence" value="ECO:0007669"/>
    <property type="project" value="UniProtKB-UniRule"/>
</dbReference>
<dbReference type="GO" id="GO:0000049">
    <property type="term" value="F:tRNA binding"/>
    <property type="evidence" value="ECO:0007669"/>
    <property type="project" value="UniProtKB-UniRule"/>
</dbReference>
<dbReference type="GO" id="GO:0070475">
    <property type="term" value="P:rRNA base methylation"/>
    <property type="evidence" value="ECO:0007669"/>
    <property type="project" value="UniProtKB-UniRule"/>
</dbReference>
<dbReference type="GO" id="GO:0030488">
    <property type="term" value="P:tRNA methylation"/>
    <property type="evidence" value="ECO:0007669"/>
    <property type="project" value="UniProtKB-UniRule"/>
</dbReference>
<dbReference type="CDD" id="cd01335">
    <property type="entry name" value="Radical_SAM"/>
    <property type="match status" value="1"/>
</dbReference>
<dbReference type="FunFam" id="1.10.150.530:FF:000003">
    <property type="entry name" value="Dual-specificity RNA methyltransferase RlmN"/>
    <property type="match status" value="1"/>
</dbReference>
<dbReference type="FunFam" id="3.20.20.70:FF:000008">
    <property type="entry name" value="Dual-specificity RNA methyltransferase RlmN"/>
    <property type="match status" value="1"/>
</dbReference>
<dbReference type="Gene3D" id="1.10.150.530">
    <property type="match status" value="1"/>
</dbReference>
<dbReference type="Gene3D" id="3.20.20.70">
    <property type="entry name" value="Aldolase class I"/>
    <property type="match status" value="1"/>
</dbReference>
<dbReference type="HAMAP" id="MF_01849">
    <property type="entry name" value="RNA_methyltr_RlmN"/>
    <property type="match status" value="1"/>
</dbReference>
<dbReference type="InterPro" id="IPR013785">
    <property type="entry name" value="Aldolase_TIM"/>
</dbReference>
<dbReference type="InterPro" id="IPR040072">
    <property type="entry name" value="Methyltransferase_A"/>
</dbReference>
<dbReference type="InterPro" id="IPR048641">
    <property type="entry name" value="RlmN_N"/>
</dbReference>
<dbReference type="InterPro" id="IPR027492">
    <property type="entry name" value="RNA_MTrfase_RlmN"/>
</dbReference>
<dbReference type="InterPro" id="IPR004383">
    <property type="entry name" value="rRNA_lsu_MTrfase_RlmN/Cfr"/>
</dbReference>
<dbReference type="InterPro" id="IPR007197">
    <property type="entry name" value="rSAM"/>
</dbReference>
<dbReference type="NCBIfam" id="TIGR00048">
    <property type="entry name" value="rRNA_mod_RlmN"/>
    <property type="match status" value="1"/>
</dbReference>
<dbReference type="PANTHER" id="PTHR30544">
    <property type="entry name" value="23S RRNA METHYLTRANSFERASE"/>
    <property type="match status" value="1"/>
</dbReference>
<dbReference type="PANTHER" id="PTHR30544:SF5">
    <property type="entry name" value="RADICAL SAM CORE DOMAIN-CONTAINING PROTEIN"/>
    <property type="match status" value="1"/>
</dbReference>
<dbReference type="Pfam" id="PF04055">
    <property type="entry name" value="Radical_SAM"/>
    <property type="match status" value="1"/>
</dbReference>
<dbReference type="Pfam" id="PF21016">
    <property type="entry name" value="RlmN_N"/>
    <property type="match status" value="1"/>
</dbReference>
<dbReference type="PIRSF" id="PIRSF006004">
    <property type="entry name" value="CHP00048"/>
    <property type="match status" value="1"/>
</dbReference>
<dbReference type="SFLD" id="SFLDF00275">
    <property type="entry name" value="adenosine_C2_methyltransferase"/>
    <property type="match status" value="1"/>
</dbReference>
<dbReference type="SFLD" id="SFLDG01062">
    <property type="entry name" value="methyltransferase_(Class_A)"/>
    <property type="match status" value="1"/>
</dbReference>
<dbReference type="SUPFAM" id="SSF102114">
    <property type="entry name" value="Radical SAM enzymes"/>
    <property type="match status" value="1"/>
</dbReference>
<dbReference type="PROSITE" id="PS51918">
    <property type="entry name" value="RADICAL_SAM"/>
    <property type="match status" value="1"/>
</dbReference>
<organism>
    <name type="scientific">Pseudomonas putida (strain W619)</name>
    <dbReference type="NCBI Taxonomy" id="390235"/>
    <lineage>
        <taxon>Bacteria</taxon>
        <taxon>Pseudomonadati</taxon>
        <taxon>Pseudomonadota</taxon>
        <taxon>Gammaproteobacteria</taxon>
        <taxon>Pseudomonadales</taxon>
        <taxon>Pseudomonadaceae</taxon>
        <taxon>Pseudomonas</taxon>
    </lineage>
</organism>
<evidence type="ECO:0000255" key="1">
    <source>
        <dbReference type="HAMAP-Rule" id="MF_01849"/>
    </source>
</evidence>
<evidence type="ECO:0000255" key="2">
    <source>
        <dbReference type="PROSITE-ProRule" id="PRU01266"/>
    </source>
</evidence>
<proteinExistence type="inferred from homology"/>
<gene>
    <name evidence="1" type="primary">rlmN</name>
    <name type="ordered locus">PputW619_4328</name>
</gene>
<feature type="chain" id="PRO_0000350343" description="Dual-specificity RNA methyltransferase RlmN">
    <location>
        <begin position="1"/>
        <end position="381"/>
    </location>
</feature>
<feature type="domain" description="Radical SAM core" evidence="2">
    <location>
        <begin position="102"/>
        <end position="342"/>
    </location>
</feature>
<feature type="active site" description="Proton acceptor" evidence="1">
    <location>
        <position position="96"/>
    </location>
</feature>
<feature type="active site" description="S-methylcysteine intermediate" evidence="1">
    <location>
        <position position="345"/>
    </location>
</feature>
<feature type="binding site" evidence="1">
    <location>
        <position position="116"/>
    </location>
    <ligand>
        <name>[4Fe-4S] cluster</name>
        <dbReference type="ChEBI" id="CHEBI:49883"/>
        <note>4Fe-4S-S-AdoMet</note>
    </ligand>
</feature>
<feature type="binding site" evidence="1">
    <location>
        <position position="120"/>
    </location>
    <ligand>
        <name>[4Fe-4S] cluster</name>
        <dbReference type="ChEBI" id="CHEBI:49883"/>
        <note>4Fe-4S-S-AdoMet</note>
    </ligand>
</feature>
<feature type="binding site" evidence="1">
    <location>
        <position position="123"/>
    </location>
    <ligand>
        <name>[4Fe-4S] cluster</name>
        <dbReference type="ChEBI" id="CHEBI:49883"/>
        <note>4Fe-4S-S-AdoMet</note>
    </ligand>
</feature>
<feature type="binding site" evidence="1">
    <location>
        <begin position="170"/>
        <end position="171"/>
    </location>
    <ligand>
        <name>S-adenosyl-L-methionine</name>
        <dbReference type="ChEBI" id="CHEBI:59789"/>
    </ligand>
</feature>
<feature type="binding site" evidence="1">
    <location>
        <position position="202"/>
    </location>
    <ligand>
        <name>S-adenosyl-L-methionine</name>
        <dbReference type="ChEBI" id="CHEBI:59789"/>
    </ligand>
</feature>
<feature type="binding site" evidence="1">
    <location>
        <begin position="224"/>
        <end position="226"/>
    </location>
    <ligand>
        <name>S-adenosyl-L-methionine</name>
        <dbReference type="ChEBI" id="CHEBI:59789"/>
    </ligand>
</feature>
<feature type="binding site" evidence="1">
    <location>
        <position position="302"/>
    </location>
    <ligand>
        <name>S-adenosyl-L-methionine</name>
        <dbReference type="ChEBI" id="CHEBI:59789"/>
    </ligand>
</feature>
<feature type="disulfide bond" description="(transient)" evidence="1">
    <location>
        <begin position="109"/>
        <end position="345"/>
    </location>
</feature>
<name>RLMN_PSEPW</name>
<reference key="1">
    <citation type="submission" date="2008-02" db="EMBL/GenBank/DDBJ databases">
        <title>Complete sequence of Pseudomonas putida W619.</title>
        <authorList>
            <person name="Copeland A."/>
            <person name="Lucas S."/>
            <person name="Lapidus A."/>
            <person name="Barry K."/>
            <person name="Detter J.C."/>
            <person name="Glavina del Rio T."/>
            <person name="Dalin E."/>
            <person name="Tice H."/>
            <person name="Pitluck S."/>
            <person name="Chain P."/>
            <person name="Malfatti S."/>
            <person name="Shin M."/>
            <person name="Vergez L."/>
            <person name="Schmutz J."/>
            <person name="Larimer F."/>
            <person name="Land M."/>
            <person name="Hauser L."/>
            <person name="Kyrpides N."/>
            <person name="Kim E."/>
            <person name="Taghavi S."/>
            <person name="Vangronsveld D."/>
            <person name="van der Lelie D."/>
            <person name="Richardson P."/>
        </authorList>
    </citation>
    <scope>NUCLEOTIDE SEQUENCE [LARGE SCALE GENOMIC DNA]</scope>
    <source>
        <strain>W619</strain>
    </source>
</reference>
<protein>
    <recommendedName>
        <fullName evidence="1">Dual-specificity RNA methyltransferase RlmN</fullName>
        <ecNumber evidence="1">2.1.1.192</ecNumber>
    </recommendedName>
    <alternativeName>
        <fullName evidence="1">23S rRNA (adenine(2503)-C(2))-methyltransferase</fullName>
    </alternativeName>
    <alternativeName>
        <fullName evidence="1">23S rRNA m2A2503 methyltransferase</fullName>
    </alternativeName>
    <alternativeName>
        <fullName evidence="1">Ribosomal RNA large subunit methyltransferase N</fullName>
    </alternativeName>
    <alternativeName>
        <fullName evidence="1">tRNA (adenine(37)-C(2))-methyltransferase</fullName>
    </alternativeName>
    <alternativeName>
        <fullName evidence="1">tRNA m2A37 methyltransferase</fullName>
    </alternativeName>
</protein>
<sequence length="381" mass="42044">MTTSTGKINLLGLTQPEMEQFFDSIGEKRFRAGQVMKWIHHFGVDDFAAMTNVGKALREKLEAVAEIRPPEVVSEDISADGTRKWVIRVASGSCVETVYIPTDDRGTLCVSSQAGCALDCSFCSTGKQGFNSNLTAAEVIGQVWLANKSFGTVPAKIDRAITNVVMMGMGEPLLNFDNVIAAMKIMMDDLGYGISKRRVTLSTSGVVPMIDELAKHIDVSLALSLHAPNDELRNQLVPINKKYPLKMLLESCMGYMATLGGKRVLTVEYTLLKDVNDQPEHAAQMIELLRDVPCKINLIPFNPFPHSGYERPSNNAIRRFQDLLHHGGFNVTTRTTRGDDIDAACGQLVGQVNDRTRRSERYIAVRQLSADAELQDSAVRH</sequence>